<dbReference type="EC" id="3.1.1.74" evidence="5"/>
<dbReference type="EMBL" id="DS027693">
    <property type="protein sequence ID" value="EAW20592.1"/>
    <property type="molecule type" value="Genomic_DNA"/>
</dbReference>
<dbReference type="RefSeq" id="XP_001262489.1">
    <property type="nucleotide sequence ID" value="XM_001262488.1"/>
</dbReference>
<dbReference type="SMR" id="A1D9W1"/>
<dbReference type="ESTHER" id="aspfu-q4w9z4">
    <property type="family name" value="Cutinase"/>
</dbReference>
<dbReference type="EnsemblFungi" id="EAW20592">
    <property type="protein sequence ID" value="EAW20592"/>
    <property type="gene ID" value="NFIA_030250"/>
</dbReference>
<dbReference type="GeneID" id="4588994"/>
<dbReference type="KEGG" id="nfi:NFIA_030250"/>
<dbReference type="VEuPathDB" id="FungiDB:NFIA_030250"/>
<dbReference type="eggNOG" id="ENOG502SI38">
    <property type="taxonomic scope" value="Eukaryota"/>
</dbReference>
<dbReference type="HOGENOM" id="CLU_040058_2_0_1"/>
<dbReference type="OMA" id="FFGFTRN"/>
<dbReference type="OrthoDB" id="3225429at2759"/>
<dbReference type="Proteomes" id="UP000006702">
    <property type="component" value="Unassembled WGS sequence"/>
</dbReference>
<dbReference type="GO" id="GO:0005576">
    <property type="term" value="C:extracellular region"/>
    <property type="evidence" value="ECO:0007669"/>
    <property type="project" value="UniProtKB-SubCell"/>
</dbReference>
<dbReference type="GO" id="GO:0050525">
    <property type="term" value="F:cutinase activity"/>
    <property type="evidence" value="ECO:0000250"/>
    <property type="project" value="UniProtKB"/>
</dbReference>
<dbReference type="GO" id="GO:0016052">
    <property type="term" value="P:carbohydrate catabolic process"/>
    <property type="evidence" value="ECO:0007669"/>
    <property type="project" value="TreeGrafter"/>
</dbReference>
<dbReference type="FunFam" id="3.40.50.1820:FF:000235">
    <property type="entry name" value="Cutinase 1"/>
    <property type="match status" value="1"/>
</dbReference>
<dbReference type="Gene3D" id="3.40.50.1820">
    <property type="entry name" value="alpha/beta hydrolase"/>
    <property type="match status" value="1"/>
</dbReference>
<dbReference type="InterPro" id="IPR029058">
    <property type="entry name" value="AB_hydrolase_fold"/>
</dbReference>
<dbReference type="InterPro" id="IPR000675">
    <property type="entry name" value="Cutinase/axe"/>
</dbReference>
<dbReference type="InterPro" id="IPR043580">
    <property type="entry name" value="CUTINASE_1"/>
</dbReference>
<dbReference type="InterPro" id="IPR011150">
    <property type="entry name" value="Cutinase_monf"/>
</dbReference>
<dbReference type="PANTHER" id="PTHR48250:SF3">
    <property type="entry name" value="CUTINASE 1-RELATED"/>
    <property type="match status" value="1"/>
</dbReference>
<dbReference type="PANTHER" id="PTHR48250">
    <property type="entry name" value="CUTINASE 2-RELATED"/>
    <property type="match status" value="1"/>
</dbReference>
<dbReference type="Pfam" id="PF01083">
    <property type="entry name" value="Cutinase"/>
    <property type="match status" value="1"/>
</dbReference>
<dbReference type="PRINTS" id="PR00129">
    <property type="entry name" value="CUTINASE"/>
</dbReference>
<dbReference type="SMART" id="SM01110">
    <property type="entry name" value="Cutinase"/>
    <property type="match status" value="1"/>
</dbReference>
<dbReference type="SUPFAM" id="SSF53474">
    <property type="entry name" value="alpha/beta-Hydrolases"/>
    <property type="match status" value="1"/>
</dbReference>
<dbReference type="PROSITE" id="PS00155">
    <property type="entry name" value="CUTINASE_1"/>
    <property type="match status" value="1"/>
</dbReference>
<protein>
    <recommendedName>
        <fullName>Probable cutinase 3</fullName>
        <ecNumber evidence="5">3.1.1.74</ecNumber>
    </recommendedName>
    <alternativeName>
        <fullName>Cutin hydrolase 3</fullName>
    </alternativeName>
</protein>
<organism>
    <name type="scientific">Neosartorya fischeri (strain ATCC 1020 / DSM 3700 / CBS 544.65 / FGSC A1164 / JCM 1740 / NRRL 181 / WB 181)</name>
    <name type="common">Aspergillus fischerianus</name>
    <dbReference type="NCBI Taxonomy" id="331117"/>
    <lineage>
        <taxon>Eukaryota</taxon>
        <taxon>Fungi</taxon>
        <taxon>Dikarya</taxon>
        <taxon>Ascomycota</taxon>
        <taxon>Pezizomycotina</taxon>
        <taxon>Eurotiomycetes</taxon>
        <taxon>Eurotiomycetidae</taxon>
        <taxon>Eurotiales</taxon>
        <taxon>Aspergillaceae</taxon>
        <taxon>Aspergillus</taxon>
        <taxon>Aspergillus subgen. Fumigati</taxon>
    </lineage>
</organism>
<gene>
    <name type="ORF">NFIA_030250</name>
</gene>
<reference key="1">
    <citation type="journal article" date="2008" name="PLoS Genet.">
        <title>Genomic islands in the pathogenic filamentous fungus Aspergillus fumigatus.</title>
        <authorList>
            <person name="Fedorova N.D."/>
            <person name="Khaldi N."/>
            <person name="Joardar V.S."/>
            <person name="Maiti R."/>
            <person name="Amedeo P."/>
            <person name="Anderson M.J."/>
            <person name="Crabtree J."/>
            <person name="Silva J.C."/>
            <person name="Badger J.H."/>
            <person name="Albarraq A."/>
            <person name="Angiuoli S."/>
            <person name="Bussey H."/>
            <person name="Bowyer P."/>
            <person name="Cotty P.J."/>
            <person name="Dyer P.S."/>
            <person name="Egan A."/>
            <person name="Galens K."/>
            <person name="Fraser-Liggett C.M."/>
            <person name="Haas B.J."/>
            <person name="Inman J.M."/>
            <person name="Kent R."/>
            <person name="Lemieux S."/>
            <person name="Malavazi I."/>
            <person name="Orvis J."/>
            <person name="Roemer T."/>
            <person name="Ronning C.M."/>
            <person name="Sundaram J.P."/>
            <person name="Sutton G."/>
            <person name="Turner G."/>
            <person name="Venter J.C."/>
            <person name="White O.R."/>
            <person name="Whitty B.R."/>
            <person name="Youngman P."/>
            <person name="Wolfe K.H."/>
            <person name="Goldman G.H."/>
            <person name="Wortman J.R."/>
            <person name="Jiang B."/>
            <person name="Denning D.W."/>
            <person name="Nierman W.C."/>
        </authorList>
    </citation>
    <scope>NUCLEOTIDE SEQUENCE [LARGE SCALE GENOMIC DNA]</scope>
    <source>
        <strain>ATCC 1020 / DSM 3700 / CBS 544.65 / FGSC A1164 / JCM 1740 / NRRL 181 / WB 181</strain>
    </source>
</reference>
<comment type="function">
    <text evidence="1">Catalyzes the hydrolysis of complex carboxylic polyesters found in the cell wall of plants (By similarity). Degrades cutin, a macromolecule that forms the structure of the plant cuticle (By similarity).</text>
</comment>
<comment type="catalytic activity">
    <reaction evidence="5">
        <text>cutin + H2O = cutin monomers.</text>
        <dbReference type="EC" id="3.1.1.74"/>
    </reaction>
</comment>
<comment type="subcellular location">
    <subcellularLocation>
        <location evidence="2">Secreted</location>
    </subcellularLocation>
</comment>
<comment type="similarity">
    <text evidence="6">Belongs to the cutinase family.</text>
</comment>
<proteinExistence type="inferred from homology"/>
<keyword id="KW-1015">Disulfide bond</keyword>
<keyword id="KW-0378">Hydrolase</keyword>
<keyword id="KW-1185">Reference proteome</keyword>
<keyword id="KW-0964">Secreted</keyword>
<keyword id="KW-0719">Serine esterase</keyword>
<keyword id="KW-0732">Signal</keyword>
<evidence type="ECO:0000250" key="1">
    <source>
        <dbReference type="UniProtKB" id="P00590"/>
    </source>
</evidence>
<evidence type="ECO:0000250" key="2">
    <source>
        <dbReference type="UniProtKB" id="P11373"/>
    </source>
</evidence>
<evidence type="ECO:0000250" key="3">
    <source>
        <dbReference type="UniProtKB" id="P52956"/>
    </source>
</evidence>
<evidence type="ECO:0000255" key="4"/>
<evidence type="ECO:0000255" key="5">
    <source>
        <dbReference type="PROSITE-ProRule" id="PRU10108"/>
    </source>
</evidence>
<evidence type="ECO:0000305" key="6"/>
<sequence>MSLRSLFVAGLATLALAAPAPQIQARQGMSSNELESGPCRDVTFIFARGSTEQGNMGFIVGPGVCSSLKNDLGSDKVACQGVGGAYTAQLAPNFLSQNTDQASIDAATDMFDLANTKCPNTKIVAGGYSQGSAVIDNAIQALDSDLKAKVKGVVLFGFTRNVVDKGQIPGYPKDQTKIYCALGDLVCDNTLIITAAHLSYGADADDAAKFLASKVQG</sequence>
<feature type="signal peptide" evidence="4">
    <location>
        <begin position="1"/>
        <end position="17"/>
    </location>
</feature>
<feature type="chain" id="PRO_0000395265" description="Probable cutinase 3">
    <location>
        <begin position="18"/>
        <end position="217"/>
    </location>
</feature>
<feature type="active site" description="Nucleophile" evidence="5">
    <location>
        <position position="129"/>
    </location>
</feature>
<feature type="active site" evidence="5">
    <location>
        <position position="184"/>
    </location>
</feature>
<feature type="active site" description="Proton donor/acceptor" evidence="5">
    <location>
        <position position="197"/>
    </location>
</feature>
<feature type="site" description="Transition state stabilizer" evidence="1">
    <location>
        <position position="50"/>
    </location>
</feature>
<feature type="site" description="Transition state stabilizer" evidence="1">
    <location>
        <position position="130"/>
    </location>
</feature>
<feature type="disulfide bond" evidence="3">
    <location>
        <begin position="39"/>
        <end position="118"/>
    </location>
</feature>
<feature type="disulfide bond" evidence="3">
    <location>
        <begin position="65"/>
        <end position="79"/>
    </location>
</feature>
<feature type="disulfide bond" evidence="3">
    <location>
        <begin position="180"/>
        <end position="187"/>
    </location>
</feature>
<name>CUTI3_NEOFI</name>
<accession>A1D9W1</accession>